<keyword id="KW-0067">ATP-binding</keyword>
<keyword id="KW-0963">Cytoplasm</keyword>
<keyword id="KW-0418">Kinase</keyword>
<keyword id="KW-0547">Nucleotide-binding</keyword>
<keyword id="KW-1185">Reference proteome</keyword>
<keyword id="KW-0808">Transferase</keyword>
<proteinExistence type="inferred from homology"/>
<feature type="chain" id="PRO_0000132026" description="Cytidylate kinase">
    <location>
        <begin position="1"/>
        <end position="188"/>
    </location>
</feature>
<feature type="binding site" evidence="1">
    <location>
        <begin position="7"/>
        <end position="15"/>
    </location>
    <ligand>
        <name>ATP</name>
        <dbReference type="ChEBI" id="CHEBI:30616"/>
    </ligand>
</feature>
<protein>
    <recommendedName>
        <fullName>Cytidylate kinase</fullName>
        <shortName>CK</shortName>
        <ecNumber>2.7.4.25</ecNumber>
    </recommendedName>
    <alternativeName>
        <fullName>Cytidine monophosphate kinase</fullName>
        <shortName>CMP kinase</shortName>
    </alternativeName>
</protein>
<gene>
    <name type="primary">cmk</name>
    <name type="ordered locus">Ta1245</name>
</gene>
<reference key="1">
    <citation type="journal article" date="2000" name="Nature">
        <title>The genome sequence of the thermoacidophilic scavenger Thermoplasma acidophilum.</title>
        <authorList>
            <person name="Ruepp A."/>
            <person name="Graml W."/>
            <person name="Santos-Martinez M.-L."/>
            <person name="Koretke K.K."/>
            <person name="Volker C."/>
            <person name="Mewes H.-W."/>
            <person name="Frishman D."/>
            <person name="Stocker S."/>
            <person name="Lupas A.N."/>
            <person name="Baumeister W."/>
        </authorList>
    </citation>
    <scope>NUCLEOTIDE SEQUENCE [LARGE SCALE GENOMIC DNA]</scope>
    <source>
        <strain>ATCC 25905 / DSM 1728 / JCM 9062 / NBRC 15155 / AMRC-C165</strain>
    </source>
</reference>
<accession>Q9HIT3</accession>
<sequence length="188" mass="21864">MRITIAGKIGSGKSTVSSELSRITGYTVYSSGTFFRETARKMNMSIEDFNVYSESHPEADYYTDETQKAFMQANDNIIVEGRLAGWISYLNGINAFRIFLYATYYTRLVRFAGRENIDIDSARDLMEKREKSEKERYRKLYGIDVDDLSIYDIVVNTEFMKPPEIAVYIANRIDEMSRKDIFTPRILR</sequence>
<dbReference type="EC" id="2.7.4.25"/>
<dbReference type="EMBL" id="AL445067">
    <property type="protein sequence ID" value="CAC12369.1"/>
    <property type="molecule type" value="Genomic_DNA"/>
</dbReference>
<dbReference type="RefSeq" id="WP_010901652.1">
    <property type="nucleotide sequence ID" value="NC_002578.1"/>
</dbReference>
<dbReference type="SMR" id="Q9HIT3"/>
<dbReference type="FunCoup" id="Q9HIT3">
    <property type="interactions" value="13"/>
</dbReference>
<dbReference type="STRING" id="273075.gene:9572468"/>
<dbReference type="PaxDb" id="273075-Ta1245"/>
<dbReference type="EnsemblBacteria" id="CAC12369">
    <property type="protein sequence ID" value="CAC12369"/>
    <property type="gene ID" value="CAC12369"/>
</dbReference>
<dbReference type="KEGG" id="tac:Ta1245"/>
<dbReference type="eggNOG" id="arCOG01037">
    <property type="taxonomic scope" value="Archaea"/>
</dbReference>
<dbReference type="HOGENOM" id="CLU_079959_1_0_2"/>
<dbReference type="InParanoid" id="Q9HIT3"/>
<dbReference type="OrthoDB" id="31096at2157"/>
<dbReference type="Proteomes" id="UP000001024">
    <property type="component" value="Chromosome"/>
</dbReference>
<dbReference type="GO" id="GO:0005737">
    <property type="term" value="C:cytoplasm"/>
    <property type="evidence" value="ECO:0007669"/>
    <property type="project" value="UniProtKB-SubCell"/>
</dbReference>
<dbReference type="GO" id="GO:0005524">
    <property type="term" value="F:ATP binding"/>
    <property type="evidence" value="ECO:0007669"/>
    <property type="project" value="UniProtKB-UniRule"/>
</dbReference>
<dbReference type="GO" id="GO:0036430">
    <property type="term" value="F:CMP kinase activity"/>
    <property type="evidence" value="ECO:0007669"/>
    <property type="project" value="RHEA"/>
</dbReference>
<dbReference type="GO" id="GO:0036431">
    <property type="term" value="F:dCMP kinase activity"/>
    <property type="evidence" value="ECO:0007669"/>
    <property type="project" value="RHEA"/>
</dbReference>
<dbReference type="GO" id="GO:0006220">
    <property type="term" value="P:pyrimidine nucleotide metabolic process"/>
    <property type="evidence" value="ECO:0007669"/>
    <property type="project" value="UniProtKB-UniRule"/>
</dbReference>
<dbReference type="CDD" id="cd02020">
    <property type="entry name" value="CMPK"/>
    <property type="match status" value="1"/>
</dbReference>
<dbReference type="Gene3D" id="3.40.50.300">
    <property type="entry name" value="P-loop containing nucleotide triphosphate hydrolases"/>
    <property type="match status" value="1"/>
</dbReference>
<dbReference type="HAMAP" id="MF_00239">
    <property type="entry name" value="Cytidyl_kinase_type2"/>
    <property type="match status" value="1"/>
</dbReference>
<dbReference type="InterPro" id="IPR011892">
    <property type="entry name" value="Cyt_kin_arch"/>
</dbReference>
<dbReference type="InterPro" id="IPR011994">
    <property type="entry name" value="Cytidylate_kinase_dom"/>
</dbReference>
<dbReference type="InterPro" id="IPR027417">
    <property type="entry name" value="P-loop_NTPase"/>
</dbReference>
<dbReference type="NCBIfam" id="TIGR02173">
    <property type="entry name" value="cyt_kin_arch"/>
    <property type="match status" value="1"/>
</dbReference>
<dbReference type="Pfam" id="PF13189">
    <property type="entry name" value="Cytidylate_kin2"/>
    <property type="match status" value="1"/>
</dbReference>
<dbReference type="SUPFAM" id="SSF52540">
    <property type="entry name" value="P-loop containing nucleoside triphosphate hydrolases"/>
    <property type="match status" value="1"/>
</dbReference>
<comment type="catalytic activity">
    <reaction>
        <text>CMP + ATP = CDP + ADP</text>
        <dbReference type="Rhea" id="RHEA:11600"/>
        <dbReference type="ChEBI" id="CHEBI:30616"/>
        <dbReference type="ChEBI" id="CHEBI:58069"/>
        <dbReference type="ChEBI" id="CHEBI:60377"/>
        <dbReference type="ChEBI" id="CHEBI:456216"/>
        <dbReference type="EC" id="2.7.4.25"/>
    </reaction>
</comment>
<comment type="catalytic activity">
    <reaction>
        <text>dCMP + ATP = dCDP + ADP</text>
        <dbReference type="Rhea" id="RHEA:25094"/>
        <dbReference type="ChEBI" id="CHEBI:30616"/>
        <dbReference type="ChEBI" id="CHEBI:57566"/>
        <dbReference type="ChEBI" id="CHEBI:58593"/>
        <dbReference type="ChEBI" id="CHEBI:456216"/>
        <dbReference type="EC" id="2.7.4.25"/>
    </reaction>
</comment>
<comment type="subcellular location">
    <subcellularLocation>
        <location evidence="1">Cytoplasm</location>
    </subcellularLocation>
</comment>
<comment type="similarity">
    <text evidence="2">Belongs to the cytidylate kinase family. Type 2 subfamily.</text>
</comment>
<name>KCY_THEAC</name>
<evidence type="ECO:0000250" key="1"/>
<evidence type="ECO:0000305" key="2"/>
<organism>
    <name type="scientific">Thermoplasma acidophilum (strain ATCC 25905 / DSM 1728 / JCM 9062 / NBRC 15155 / AMRC-C165)</name>
    <dbReference type="NCBI Taxonomy" id="273075"/>
    <lineage>
        <taxon>Archaea</taxon>
        <taxon>Methanobacteriati</taxon>
        <taxon>Thermoplasmatota</taxon>
        <taxon>Thermoplasmata</taxon>
        <taxon>Thermoplasmatales</taxon>
        <taxon>Thermoplasmataceae</taxon>
        <taxon>Thermoplasma</taxon>
    </lineage>
</organism>